<protein>
    <recommendedName>
        <fullName evidence="1">GDP-mannose 4,6-dehydratase</fullName>
        <ecNumber evidence="1">4.2.1.47</ecNumber>
    </recommendedName>
    <alternativeName>
        <fullName evidence="1">GDP-D-mannose dehydratase</fullName>
    </alternativeName>
</protein>
<gene>
    <name evidence="1" type="primary">gmd</name>
    <name type="ordered locus">YE3075</name>
</gene>
<reference key="1">
    <citation type="journal article" date="1996" name="Microbiology">
        <title>The gene cluster directing O-antigen biosynthesis in Yersinia enterocolitica serotype 0:8: identification of the genes for mannose and galactose biosynthesis and the gene for the O-antigen polymerase.</title>
        <authorList>
            <person name="Zhang L."/>
            <person name="Toivanen P."/>
            <person name="Skurnik M."/>
        </authorList>
    </citation>
    <scope>NUCLEOTIDE SEQUENCE [GENOMIC DNA]</scope>
    <scope>PATHWAY</scope>
</reference>
<reference key="2">
    <citation type="journal article" date="2006" name="PLoS Genet.">
        <title>The complete genome sequence and comparative genome analysis of the high pathogenicity Yersinia enterocolitica strain 8081.</title>
        <authorList>
            <person name="Thomson N.R."/>
            <person name="Howard S."/>
            <person name="Wren B.W."/>
            <person name="Holden M.T.G."/>
            <person name="Crossman L."/>
            <person name="Challis G.L."/>
            <person name="Churcher C."/>
            <person name="Mungall K."/>
            <person name="Brooks K."/>
            <person name="Chillingworth T."/>
            <person name="Feltwell T."/>
            <person name="Abdellah Z."/>
            <person name="Hauser H."/>
            <person name="Jagels K."/>
            <person name="Maddison M."/>
            <person name="Moule S."/>
            <person name="Sanders M."/>
            <person name="Whitehead S."/>
            <person name="Quail M.A."/>
            <person name="Dougan G."/>
            <person name="Parkhill J."/>
            <person name="Prentice M.B."/>
        </authorList>
    </citation>
    <scope>NUCLEOTIDE SEQUENCE [LARGE SCALE GENOMIC DNA]</scope>
    <source>
        <strain>NCTC 13174 / 8081</strain>
    </source>
</reference>
<accession>Q56872</accession>
<accession>A1JN62</accession>
<name>GM4D_YERE8</name>
<dbReference type="EC" id="4.2.1.47" evidence="1"/>
<dbReference type="EMBL" id="U46859">
    <property type="protein sequence ID" value="AAC60773.1"/>
    <property type="molecule type" value="Genomic_DNA"/>
</dbReference>
<dbReference type="EMBL" id="AM286415">
    <property type="protein sequence ID" value="CAL13110.1"/>
    <property type="molecule type" value="Genomic_DNA"/>
</dbReference>
<dbReference type="RefSeq" id="WP_005167740.1">
    <property type="nucleotide sequence ID" value="NC_008800.1"/>
</dbReference>
<dbReference type="RefSeq" id="YP_001007257.1">
    <property type="nucleotide sequence ID" value="NC_008800.1"/>
</dbReference>
<dbReference type="SMR" id="Q56872"/>
<dbReference type="KEGG" id="yen:YE3075"/>
<dbReference type="PATRIC" id="fig|393305.7.peg.3272"/>
<dbReference type="eggNOG" id="COG1089">
    <property type="taxonomic scope" value="Bacteria"/>
</dbReference>
<dbReference type="HOGENOM" id="CLU_007383_14_0_6"/>
<dbReference type="OrthoDB" id="9779041at2"/>
<dbReference type="UniPathway" id="UPA00128">
    <property type="reaction ID" value="UER00190"/>
</dbReference>
<dbReference type="UniPathway" id="UPA00281"/>
<dbReference type="Proteomes" id="UP000000642">
    <property type="component" value="Chromosome"/>
</dbReference>
<dbReference type="GO" id="GO:0008446">
    <property type="term" value="F:GDP-mannose 4,6-dehydratase activity"/>
    <property type="evidence" value="ECO:0007669"/>
    <property type="project" value="UniProtKB-UniRule"/>
</dbReference>
<dbReference type="GO" id="GO:0070401">
    <property type="term" value="F:NADP+ binding"/>
    <property type="evidence" value="ECO:0007669"/>
    <property type="project" value="UniProtKB-UniRule"/>
</dbReference>
<dbReference type="GO" id="GO:0042351">
    <property type="term" value="P:'de novo' GDP-L-fucose biosynthetic process"/>
    <property type="evidence" value="ECO:0007669"/>
    <property type="project" value="UniProtKB-UniPathway"/>
</dbReference>
<dbReference type="GO" id="GO:0009243">
    <property type="term" value="P:O antigen biosynthetic process"/>
    <property type="evidence" value="ECO:0007669"/>
    <property type="project" value="UniProtKB-UniPathway"/>
</dbReference>
<dbReference type="CDD" id="cd05260">
    <property type="entry name" value="GDP_MD_SDR_e"/>
    <property type="match status" value="1"/>
</dbReference>
<dbReference type="FunFam" id="3.40.50.720:FF:000924">
    <property type="entry name" value="GDP-mannose 4,6 dehydratase"/>
    <property type="match status" value="1"/>
</dbReference>
<dbReference type="Gene3D" id="3.40.50.720">
    <property type="entry name" value="NAD(P)-binding Rossmann-like Domain"/>
    <property type="match status" value="1"/>
</dbReference>
<dbReference type="Gene3D" id="3.90.25.10">
    <property type="entry name" value="UDP-galactose 4-epimerase, domain 1"/>
    <property type="match status" value="1"/>
</dbReference>
<dbReference type="HAMAP" id="MF_00955">
    <property type="entry name" value="GDP_Man_dehydratase"/>
    <property type="match status" value="1"/>
</dbReference>
<dbReference type="InterPro" id="IPR006368">
    <property type="entry name" value="GDP_Man_deHydtase"/>
</dbReference>
<dbReference type="InterPro" id="IPR016040">
    <property type="entry name" value="NAD(P)-bd_dom"/>
</dbReference>
<dbReference type="InterPro" id="IPR036291">
    <property type="entry name" value="NAD(P)-bd_dom_sf"/>
</dbReference>
<dbReference type="NCBIfam" id="TIGR01472">
    <property type="entry name" value="gmd"/>
    <property type="match status" value="1"/>
</dbReference>
<dbReference type="PANTHER" id="PTHR43715:SF1">
    <property type="entry name" value="GDP-MANNOSE 4,6 DEHYDRATASE"/>
    <property type="match status" value="1"/>
</dbReference>
<dbReference type="PANTHER" id="PTHR43715">
    <property type="entry name" value="GDP-MANNOSE 4,6-DEHYDRATASE"/>
    <property type="match status" value="1"/>
</dbReference>
<dbReference type="Pfam" id="PF16363">
    <property type="entry name" value="GDP_Man_Dehyd"/>
    <property type="match status" value="1"/>
</dbReference>
<dbReference type="SUPFAM" id="SSF51735">
    <property type="entry name" value="NAD(P)-binding Rossmann-fold domains"/>
    <property type="match status" value="1"/>
</dbReference>
<sequence length="372" mass="42122">MKKALITGITGQDGSYLAEFLLEKGYQVHGIKRRSSSFNTSRIDHIYQDPHEVNPHFFLHYGDLTDTSNLIRLVKEIQPDEIYNLGAQSHVAVSFESPEYTADVDAMGTLRLLEAVRINGLEHKTRFYQASTSELYGLVQEIPQRETTPFYPRSPYAVAKMYAYWITVNYRESYGMYACNGILFNHESPRRGETFVTRKITRAIANIALGLEDCLYLGNMDSLRDWGHAKDYVRMQWMMLQQDQPEDFVIATGKQITVREFVRMSAKEAGIEIEFSGKGIDEIATISAISDEYATSAKVGDIIVRVDPRYFRPAEVETLLGDPSKAKEKLGWVPEITVEEMCAEMVAGDLQQAKQHALLKANGFDVSITLES</sequence>
<feature type="chain" id="PRO_0000201719" description="GDP-mannose 4,6-dehydratase">
    <location>
        <begin position="1"/>
        <end position="372"/>
    </location>
</feature>
<feature type="active site" evidence="1">
    <location>
        <position position="132"/>
    </location>
</feature>
<feature type="active site" description="Nucleophile" evidence="1">
    <location>
        <position position="134"/>
    </location>
</feature>
<feature type="active site" description="Nucleophile" evidence="1">
    <location>
        <position position="156"/>
    </location>
</feature>
<feature type="binding site" evidence="1">
    <location>
        <begin position="8"/>
        <end position="13"/>
    </location>
    <ligand>
        <name>NADP(+)</name>
        <dbReference type="ChEBI" id="CHEBI:58349"/>
    </ligand>
</feature>
<feature type="binding site" evidence="1">
    <location>
        <begin position="63"/>
        <end position="64"/>
    </location>
    <ligand>
        <name>NADP(+)</name>
        <dbReference type="ChEBI" id="CHEBI:58349"/>
    </ligand>
</feature>
<feature type="binding site" evidence="1">
    <location>
        <begin position="85"/>
        <end position="89"/>
    </location>
    <ligand>
        <name>NADP(+)</name>
        <dbReference type="ChEBI" id="CHEBI:58349"/>
    </ligand>
</feature>
<feature type="binding site" evidence="1">
    <location>
        <position position="100"/>
    </location>
    <ligand>
        <name>NADP(+)</name>
        <dbReference type="ChEBI" id="CHEBI:58349"/>
    </ligand>
</feature>
<feature type="binding site" evidence="1">
    <location>
        <position position="160"/>
    </location>
    <ligand>
        <name>NADP(+)</name>
        <dbReference type="ChEBI" id="CHEBI:58349"/>
    </ligand>
</feature>
<feature type="binding site" evidence="1">
    <location>
        <position position="186"/>
    </location>
    <ligand>
        <name>NADP(+)</name>
        <dbReference type="ChEBI" id="CHEBI:58349"/>
    </ligand>
</feature>
<feature type="binding site" evidence="1">
    <location>
        <position position="191"/>
    </location>
    <ligand>
        <name>NADP(+)</name>
        <dbReference type="ChEBI" id="CHEBI:58349"/>
    </ligand>
</feature>
<feature type="sequence conflict" description="In Ref. 1; AAC60773." evidence="3" ref="1">
    <original>GE</original>
    <variation>PQ</variation>
    <location>
        <begin position="192"/>
        <end position="193"/>
    </location>
</feature>
<feature type="sequence conflict" description="In Ref. 1; AAC60773." evidence="3" ref="1">
    <original>E</original>
    <variation>K</variation>
    <location>
        <position position="328"/>
    </location>
</feature>
<organism>
    <name type="scientific">Yersinia enterocolitica serotype O:8 / biotype 1B (strain NCTC 13174 / 8081)</name>
    <dbReference type="NCBI Taxonomy" id="393305"/>
    <lineage>
        <taxon>Bacteria</taxon>
        <taxon>Pseudomonadati</taxon>
        <taxon>Pseudomonadota</taxon>
        <taxon>Gammaproteobacteria</taxon>
        <taxon>Enterobacterales</taxon>
        <taxon>Yersiniaceae</taxon>
        <taxon>Yersinia</taxon>
    </lineage>
</organism>
<proteinExistence type="inferred from homology"/>
<evidence type="ECO:0000255" key="1">
    <source>
        <dbReference type="HAMAP-Rule" id="MF_00955"/>
    </source>
</evidence>
<evidence type="ECO:0000269" key="2">
    <source>
    </source>
</evidence>
<evidence type="ECO:0000305" key="3"/>
<keyword id="KW-0448">Lipopolysaccharide biosynthesis</keyword>
<keyword id="KW-0456">Lyase</keyword>
<keyword id="KW-0521">NADP</keyword>
<comment type="function">
    <text evidence="1">Catalyzes the conversion of GDP-D-mannose to GDP-4-dehydro-6-deoxy-D-mannose.</text>
</comment>
<comment type="catalytic activity">
    <reaction evidence="1">
        <text>GDP-alpha-D-mannose = GDP-4-dehydro-alpha-D-rhamnose + H2O</text>
        <dbReference type="Rhea" id="RHEA:23820"/>
        <dbReference type="ChEBI" id="CHEBI:15377"/>
        <dbReference type="ChEBI" id="CHEBI:57527"/>
        <dbReference type="ChEBI" id="CHEBI:57964"/>
        <dbReference type="EC" id="4.2.1.47"/>
    </reaction>
</comment>
<comment type="cofactor">
    <cofactor evidence="1">
        <name>NADP(+)</name>
        <dbReference type="ChEBI" id="CHEBI:58349"/>
    </cofactor>
</comment>
<comment type="pathway">
    <text evidence="2">Bacterial outer membrane biogenesis; LPS O-antigen biosynthesis.</text>
</comment>
<comment type="pathway">
    <text evidence="2">Nucleotide-sugar biosynthesis; GDP-L-fucose biosynthesis via de novo pathway; GDP-L-fucose from GDP-alpha-D-mannose: step 1/2.</text>
</comment>
<comment type="similarity">
    <text evidence="1">Belongs to the NAD(P)-dependent epimerase/dehydratase family. GDP-mannose 4,6-dehydratase subfamily.</text>
</comment>